<feature type="chain" id="PRO_0000054325" description="Malto-oligosyltrehalose trehalohydrolase">
    <location>
        <begin position="1"/>
        <end position="596"/>
    </location>
</feature>
<feature type="active site" description="Nucleophile" evidence="2">
    <location>
        <position position="265"/>
    </location>
</feature>
<feature type="active site" description="Proton donor" evidence="2">
    <location>
        <position position="302"/>
    </location>
</feature>
<feature type="binding site" evidence="2">
    <location>
        <begin position="263"/>
        <end position="268"/>
    </location>
    <ligand>
        <name>substrate</name>
    </ligand>
</feature>
<feature type="binding site" evidence="2">
    <location>
        <begin position="327"/>
        <end position="331"/>
    </location>
    <ligand>
        <name>substrate</name>
    </ligand>
</feature>
<feature type="binding site" evidence="2">
    <location>
        <begin position="397"/>
        <end position="402"/>
    </location>
    <ligand>
        <name>substrate</name>
    </ligand>
</feature>
<feature type="site" description="Transition state stabilizer" evidence="2">
    <location>
        <position position="398"/>
    </location>
</feature>
<evidence type="ECO:0000250" key="1"/>
<evidence type="ECO:0000250" key="2">
    <source>
        <dbReference type="UniProtKB" id="Q55088"/>
    </source>
</evidence>
<evidence type="ECO:0000305" key="3"/>
<protein>
    <recommendedName>
        <fullName>Malto-oligosyltrehalose trehalohydrolase</fullName>
        <shortName>MTHase</shortName>
        <ecNumber evidence="2">3.2.1.141</ecNumber>
    </recommendedName>
    <alternativeName>
        <fullName>4-alpha-D-((1-&gt;4)-alpha-D-glucano)trehalose trehalohydrolase</fullName>
    </alternativeName>
    <alternativeName>
        <fullName>Maltooligosyl trehalose trehalohydrolase</fullName>
    </alternativeName>
</protein>
<sequence length="596" mass="65263">MTQPNDAAKPVQGAGRFDIWAPEAGTVTLLAGGERYEMGRRPGNGPADEGWWTAADAPTGADVDYGYLLDGDEIPLPDPRTRRQPEGVHALSRTFDPGAHRWQDAGWQGRELQGSVIYELHIGTFTPEGTLDAAAGKLDYLAGLGIDFIELLPVNAFNGTHNWGYDGVQWFAVHEGYGGPAAYQRFVDAAHAAGLGVIQDVVYNHLGPSGNYLPRYGPYLKHGEGNTWGDSVNLDGPGSDHVRQYILDNVAMWLRDYRVDGLRLDAVHALKDERAVHILEEFGALADALSSEGGRPLTLIAESDLNNPRLLYPRDVNGYGLAGQWSDDFHHAVHVNVSGETTGYYSDFDSLGALAKVLRDGFFHDGSYSSFRGRCHGRPINFSAVHPAALVVCSQNHDQIGNRATGDRLSQSLPYGSLALAAVLTLTGPFTPMLFMGEEYGATTPWQFFTSHPEPELGKATAEGRIREFERMGWDPAVVPDPQDPETFTRSKLDWAEASAGDHARLLELYRSLITLRRSTPELARLGFADTAVEFDDDARWLRYWRGGVQVVLNFADRPISLDRPGTALLLATDDAVRMDGVQVELPPLSAAVLRD</sequence>
<dbReference type="EC" id="3.2.1.141" evidence="2"/>
<dbReference type="EMBL" id="D78001">
    <property type="protein sequence ID" value="BAA11187.1"/>
    <property type="molecule type" value="Genomic_DNA"/>
</dbReference>
<dbReference type="PIR" id="JC4697">
    <property type="entry name" value="JC4697"/>
</dbReference>
<dbReference type="SMR" id="Q53238"/>
<dbReference type="CAZy" id="CBM48">
    <property type="family name" value="Carbohydrate-Binding Module Family 48"/>
</dbReference>
<dbReference type="CAZy" id="GH13">
    <property type="family name" value="Glycoside Hydrolase Family 13"/>
</dbReference>
<dbReference type="UniPathway" id="UPA00299"/>
<dbReference type="GO" id="GO:0005737">
    <property type="term" value="C:cytoplasm"/>
    <property type="evidence" value="ECO:0007669"/>
    <property type="project" value="UniProtKB-SubCell"/>
</dbReference>
<dbReference type="GO" id="GO:0033942">
    <property type="term" value="F:4-alpha-D-(1-&gt;4)-alpha-D-glucanotrehalose trehalohydrolase activity"/>
    <property type="evidence" value="ECO:0007669"/>
    <property type="project" value="UniProtKB-EC"/>
</dbReference>
<dbReference type="GO" id="GO:0005992">
    <property type="term" value="P:trehalose biosynthetic process"/>
    <property type="evidence" value="ECO:0007669"/>
    <property type="project" value="UniProtKB-UniPathway"/>
</dbReference>
<dbReference type="CDD" id="cd11325">
    <property type="entry name" value="AmyAc_GTHase"/>
    <property type="match status" value="1"/>
</dbReference>
<dbReference type="CDD" id="cd02853">
    <property type="entry name" value="E_set_MTHase_like_N"/>
    <property type="match status" value="1"/>
</dbReference>
<dbReference type="Gene3D" id="1.10.10.760">
    <property type="entry name" value="E-set domains of sugar-utilizing enzymes"/>
    <property type="match status" value="1"/>
</dbReference>
<dbReference type="Gene3D" id="3.20.20.80">
    <property type="entry name" value="Glycosidases"/>
    <property type="match status" value="1"/>
</dbReference>
<dbReference type="Gene3D" id="2.60.40.10">
    <property type="entry name" value="Immunoglobulins"/>
    <property type="match status" value="1"/>
</dbReference>
<dbReference type="InterPro" id="IPR022567">
    <property type="entry name" value="DUF3459"/>
</dbReference>
<dbReference type="InterPro" id="IPR006047">
    <property type="entry name" value="Glyco_hydro_13_cat_dom"/>
</dbReference>
<dbReference type="InterPro" id="IPR017853">
    <property type="entry name" value="Glycoside_hydrolase_SF"/>
</dbReference>
<dbReference type="InterPro" id="IPR013783">
    <property type="entry name" value="Ig-like_fold"/>
</dbReference>
<dbReference type="InterPro" id="IPR014756">
    <property type="entry name" value="Ig_E-set"/>
</dbReference>
<dbReference type="InterPro" id="IPR012768">
    <property type="entry name" value="Trehalose_TreZ"/>
</dbReference>
<dbReference type="InterPro" id="IPR044901">
    <property type="entry name" value="Trehalose_TreZ_E-set_sf"/>
</dbReference>
<dbReference type="NCBIfam" id="TIGR02402">
    <property type="entry name" value="trehalose_TreZ"/>
    <property type="match status" value="1"/>
</dbReference>
<dbReference type="PANTHER" id="PTHR43651">
    <property type="entry name" value="1,4-ALPHA-GLUCAN-BRANCHING ENZYME"/>
    <property type="match status" value="1"/>
</dbReference>
<dbReference type="PANTHER" id="PTHR43651:SF11">
    <property type="entry name" value="MALTO-OLIGOSYLTREHALOSE TREHALOHYDROLASE"/>
    <property type="match status" value="1"/>
</dbReference>
<dbReference type="Pfam" id="PF00128">
    <property type="entry name" value="Alpha-amylase"/>
    <property type="match status" value="1"/>
</dbReference>
<dbReference type="Pfam" id="PF11941">
    <property type="entry name" value="DUF3459"/>
    <property type="match status" value="1"/>
</dbReference>
<dbReference type="PIRSF" id="PIRSF006337">
    <property type="entry name" value="Trehalose_TreZ"/>
    <property type="match status" value="1"/>
</dbReference>
<dbReference type="SMART" id="SM00642">
    <property type="entry name" value="Aamy"/>
    <property type="match status" value="1"/>
</dbReference>
<dbReference type="SUPFAM" id="SSF51445">
    <property type="entry name" value="(Trans)glycosidases"/>
    <property type="match status" value="1"/>
</dbReference>
<dbReference type="SUPFAM" id="SSF81296">
    <property type="entry name" value="E set domains"/>
    <property type="match status" value="1"/>
</dbReference>
<name>TREZ_RHIS1</name>
<proteinExistence type="inferred from homology"/>
<reference key="1">
    <citation type="journal article" date="1996" name="Biosci. Biotechnol. Biochem.">
        <title>Cloning and sequencing of trehalose biosynthesis genes from Rhizobium sp. M-11.</title>
        <authorList>
            <person name="Maruta K."/>
            <person name="Hattori K."/>
            <person name="Nakada T."/>
            <person name="Kubota M."/>
            <person name="Sugimoto T."/>
            <person name="Kurimoto M."/>
        </authorList>
    </citation>
    <scope>NUCLEOTIDE SEQUENCE [GENOMIC DNA]</scope>
</reference>
<gene>
    <name type="primary">treZ</name>
</gene>
<organism>
    <name type="scientific">Rhizobium sp. (strain M-11)</name>
    <dbReference type="NCBI Taxonomy" id="269089"/>
    <lineage>
        <taxon>Bacteria</taxon>
        <taxon>Pseudomonadati</taxon>
        <taxon>Pseudomonadota</taxon>
        <taxon>Alphaproteobacteria</taxon>
        <taxon>Hyphomicrobiales</taxon>
        <taxon>Rhizobiaceae</taxon>
        <taxon>Rhizobium/Agrobacterium group</taxon>
        <taxon>Rhizobium</taxon>
    </lineage>
</organism>
<keyword id="KW-0119">Carbohydrate metabolism</keyword>
<keyword id="KW-0963">Cytoplasm</keyword>
<keyword id="KW-0326">Glycosidase</keyword>
<keyword id="KW-0378">Hydrolase</keyword>
<accession>Q53238</accession>
<comment type="catalytic activity">
    <reaction evidence="2">
        <text>hydrolysis of (1-&gt;4)-alpha-D-glucosidic linkage in 4-alpha-D-[(1-&gt;4)-alpha-D-glucanosyl]n trehalose to yield trehalose and (1-&gt;4)-alpha-D-glucan.</text>
        <dbReference type="EC" id="3.2.1.141"/>
    </reaction>
</comment>
<comment type="pathway">
    <text>Glycan biosynthesis; trehalose biosynthesis.</text>
</comment>
<comment type="subcellular location">
    <subcellularLocation>
        <location evidence="1">Cytoplasm</location>
    </subcellularLocation>
</comment>
<comment type="similarity">
    <text evidence="3">Belongs to the glycosyl hydrolase 13 family.</text>
</comment>